<organism>
    <name type="scientific">Rattus norvegicus</name>
    <name type="common">Rat</name>
    <dbReference type="NCBI Taxonomy" id="10116"/>
    <lineage>
        <taxon>Eukaryota</taxon>
        <taxon>Metazoa</taxon>
        <taxon>Chordata</taxon>
        <taxon>Craniata</taxon>
        <taxon>Vertebrata</taxon>
        <taxon>Euteleostomi</taxon>
        <taxon>Mammalia</taxon>
        <taxon>Eutheria</taxon>
        <taxon>Euarchontoglires</taxon>
        <taxon>Glires</taxon>
        <taxon>Rodentia</taxon>
        <taxon>Myomorpha</taxon>
        <taxon>Muroidea</taxon>
        <taxon>Muridae</taxon>
        <taxon>Murinae</taxon>
        <taxon>Rattus</taxon>
    </lineage>
</organism>
<gene>
    <name type="primary">Mgat2</name>
    <name type="synonym">Gnt2</name>
</gene>
<proteinExistence type="evidence at protein level"/>
<protein>
    <recommendedName>
        <fullName>Alpha-1,6-mannosyl-glycoprotein 2-beta-N-acetylglucosaminyltransferase</fullName>
        <ecNumber evidence="3">2.4.1.143</ecNumber>
    </recommendedName>
    <alternativeName>
        <fullName evidence="4">Beta-1,2-N-acetylglucosaminyltransferase II</fullName>
    </alternativeName>
    <alternativeName>
        <fullName>GlcNAc-T II</fullName>
        <shortName>GNT-II</shortName>
    </alternativeName>
    <alternativeName>
        <fullName>Mannoside acetylglucosaminyltransferase 2</fullName>
    </alternativeName>
    <alternativeName>
        <fullName>N-glycosyl-oligosaccharide-glycoprotein N-acetylglucosaminyltransferase II</fullName>
    </alternativeName>
</protein>
<comment type="function">
    <text evidence="3">Plays an essential role in protein N-glycosylation. Catalyzes the transfer of N-acetylglucosamine (GlcNAc) onto the free terminal mannose moiety in the core structure of the nascent N-linked glycan chain, giving rise to the second branch in complex glycans.</text>
</comment>
<comment type="catalytic activity">
    <reaction evidence="3">
        <text>an N(4)-{beta-D-GlcNAc-(1-&gt;2)-alpha-D-Man-(1-&gt;3)-[alpha-D-Man-(1-&gt;6)]-beta-D-Man-(1-&gt;4)-beta-D-GlcNAc-(1-&gt;4)-beta-D-GlcNAc}-L-asparaginyl-[protein] + UDP-N-acetyl-alpha-D-glucosamine = N(4)-{beta-D-GlcNAc-(1-&gt;2)-alpha-D-Man-(1-&gt;3)-[beta-D-GlcNAc-(1-&gt;2)-alpha-D-Man-(1-&gt;6)]-beta-D-Man-(1-&gt;4)-beta-D-GlcNAc-(1-&gt;4)-beta-D-GlcNAc}-L-asparaginyl-[protein] + UDP + H(+)</text>
        <dbReference type="Rhea" id="RHEA:12941"/>
        <dbReference type="Rhea" id="RHEA-COMP:13526"/>
        <dbReference type="Rhea" id="RHEA-COMP:14369"/>
        <dbReference type="ChEBI" id="CHEBI:15378"/>
        <dbReference type="ChEBI" id="CHEBI:57705"/>
        <dbReference type="ChEBI" id="CHEBI:58223"/>
        <dbReference type="ChEBI" id="CHEBI:60615"/>
        <dbReference type="ChEBI" id="CHEBI:60651"/>
        <dbReference type="EC" id="2.4.1.143"/>
    </reaction>
</comment>
<comment type="cofactor">
    <cofactor evidence="1">
        <name>Mn(2+)</name>
        <dbReference type="ChEBI" id="CHEBI:29035"/>
    </cofactor>
</comment>
<comment type="pathway">
    <text evidence="3">Protein modification; protein glycosylation.</text>
</comment>
<comment type="subunit">
    <text evidence="1">Homodimer.</text>
</comment>
<comment type="subcellular location">
    <subcellularLocation>
        <location evidence="1">Golgi apparatus membrane</location>
        <topology evidence="1">Single-pass type II membrane protein</topology>
    </subcellularLocation>
</comment>
<comment type="tissue specificity">
    <text evidence="3">Detected in liver (at protein level). Detected in liver, brain, thymus and spleen.</text>
</comment>
<comment type="similarity">
    <text evidence="5">Belongs to the glycosyltransferase 16 (GT16) protein family.</text>
</comment>
<keyword id="KW-0903">Direct protein sequencing</keyword>
<keyword id="KW-1015">Disulfide bond</keyword>
<keyword id="KW-0325">Glycoprotein</keyword>
<keyword id="KW-0328">Glycosyltransferase</keyword>
<keyword id="KW-0333">Golgi apparatus</keyword>
<keyword id="KW-0464">Manganese</keyword>
<keyword id="KW-0472">Membrane</keyword>
<keyword id="KW-0479">Metal-binding</keyword>
<keyword id="KW-1185">Reference proteome</keyword>
<keyword id="KW-0735">Signal-anchor</keyword>
<keyword id="KW-0808">Transferase</keyword>
<keyword id="KW-0812">Transmembrane</keyword>
<keyword id="KW-1133">Transmembrane helix</keyword>
<reference key="1">
    <citation type="journal article" date="1995" name="J. Biol. Chem.">
        <title>Molecular cloning and expression of cDNA encoding the rat UDP-N-acetylglucosamine:alpha-6-D-mannoside beta-1,2-N-acetylglucosaminyltransferase II.</title>
        <authorList>
            <person name="D'Agostaro G.A.F."/>
            <person name="Zingoni A."/>
            <person name="Moritz R.L."/>
            <person name="Simpson R.J."/>
            <person name="Schachter H."/>
            <person name="Bendiak B."/>
        </authorList>
    </citation>
    <scope>NUCLEOTIDE SEQUENCE [MRNA]</scope>
    <scope>PARTIAL PROTEIN SEQUENCE</scope>
    <scope>FUNCTION</scope>
    <scope>CATALYTIC ACTIVITY</scope>
    <scope>PATHWAY</scope>
    <scope>TISSUE SPECIFICITY</scope>
    <source>
        <strain>Sprague-Dawley</strain>
        <tissue>Liver</tissue>
    </source>
</reference>
<reference key="2">
    <citation type="journal article" date="2004" name="Genome Res.">
        <title>The status, quality, and expansion of the NIH full-length cDNA project: the Mammalian Gene Collection (MGC).</title>
        <authorList>
            <consortium name="The MGC Project Team"/>
        </authorList>
    </citation>
    <scope>NUCLEOTIDE SEQUENCE [LARGE SCALE MRNA]</scope>
    <source>
        <tissue>Kidney</tissue>
    </source>
</reference>
<evidence type="ECO:0000250" key="1">
    <source>
        <dbReference type="UniProtKB" id="Q10469"/>
    </source>
</evidence>
<evidence type="ECO:0000255" key="2"/>
<evidence type="ECO:0000269" key="3">
    <source>
    </source>
</evidence>
<evidence type="ECO:0000303" key="4">
    <source>
    </source>
</evidence>
<evidence type="ECO:0000305" key="5"/>
<accession>Q09326</accession>
<feature type="chain" id="PRO_0000080520" description="Alpha-1,6-mannosyl-glycoprotein 2-beta-N-acetylglucosaminyltransferase">
    <location>
        <begin position="1"/>
        <end position="442"/>
    </location>
</feature>
<feature type="topological domain" description="Cytoplasmic" evidence="2">
    <location>
        <begin position="1"/>
        <end position="9"/>
    </location>
</feature>
<feature type="transmembrane region" description="Helical; Signal-anchor for type II membrane protein" evidence="2">
    <location>
        <begin position="10"/>
        <end position="29"/>
    </location>
</feature>
<feature type="topological domain" description="Lumenal" evidence="2">
    <location>
        <begin position="30"/>
        <end position="442"/>
    </location>
</feature>
<feature type="binding site" evidence="1">
    <location>
        <begin position="118"/>
        <end position="122"/>
    </location>
    <ligand>
        <name>substrate</name>
    </ligand>
</feature>
<feature type="binding site" evidence="1">
    <location>
        <position position="149"/>
    </location>
    <ligand>
        <name>substrate</name>
    </ligand>
</feature>
<feature type="binding site" evidence="1">
    <location>
        <begin position="224"/>
        <end position="228"/>
    </location>
    <ligand>
        <name>substrate</name>
    </ligand>
</feature>
<feature type="binding site" evidence="1">
    <location>
        <position position="256"/>
    </location>
    <ligand>
        <name>Mn(2+)</name>
        <dbReference type="ChEBI" id="CHEBI:29035"/>
    </ligand>
</feature>
<feature type="binding site" evidence="1">
    <location>
        <position position="293"/>
    </location>
    <ligand>
        <name>substrate</name>
    </ligand>
</feature>
<feature type="binding site" evidence="1">
    <location>
        <position position="369"/>
    </location>
    <ligand>
        <name>Mn(2+)</name>
        <dbReference type="ChEBI" id="CHEBI:29035"/>
    </ligand>
</feature>
<feature type="glycosylation site" description="N-linked (GlcNAc...) asparagine" evidence="2">
    <location>
        <position position="64"/>
    </location>
</feature>
<feature type="glycosylation site" description="N-linked (GlcNAc...) asparagine" evidence="2">
    <location>
        <position position="81"/>
    </location>
</feature>
<feature type="disulfide bond" evidence="1">
    <location>
        <begin position="191"/>
        <end position="205"/>
    </location>
</feature>
<feature type="disulfide bond" evidence="1">
    <location>
        <begin position="278"/>
        <end position="281"/>
    </location>
</feature>
<feature type="disulfide bond" evidence="1">
    <location>
        <begin position="329"/>
        <end position="352"/>
    </location>
</feature>
<feature type="disulfide bond" evidence="1">
    <location>
        <begin position="334"/>
        <end position="435"/>
    </location>
</feature>
<feature type="disulfide bond" evidence="1">
    <location>
        <begin position="373"/>
        <end position="381"/>
    </location>
</feature>
<sequence length="442" mass="51110">MRFRIYKRKVLILTLVVAACGFVLWSSNGRQRKNDALAPPLLDSEPLRGAGHFAASVGIRRVSNDSAAPLVPAVPRPEVDNLTLRYRSLVYQLNFDQMLRNVDKDGTWSPGELVLVVQVHNRPEYLRLLIDSLRKAQGIREVLVIFSHDFWSAEINSLISSVDFCPVLQVFFPFSIQLYPSEFPGSDPRDCPRDLKKNAALKLGCINAEYPDSFGHYREAKFSQTKHHWWWKLHFVWERVKVLQDYTGLILFLEEDHYLAPDFYHVFKKMWKLKQQECPGCDVLSLGTYTTIRSFYGIADKVDVKTWKSTEHNMGLALTRDAYQKLIECTDTFCTYDDYNWDWTLQYLTLACLPKVWKVLVPQAPRIFHAGDCGMHHKKTCRPSTQSAQIESLLNNNKQYLFPETLVIGEKFPMAAISPPRKNGGWGDIRDHELCKSYRRLQ</sequence>
<dbReference type="EC" id="2.4.1.143" evidence="3"/>
<dbReference type="EMBL" id="U21662">
    <property type="protein sequence ID" value="AAA86721.1"/>
    <property type="molecule type" value="mRNA"/>
</dbReference>
<dbReference type="EMBL" id="BC081754">
    <property type="protein sequence ID" value="AAH81754.1"/>
    <property type="molecule type" value="mRNA"/>
</dbReference>
<dbReference type="PIR" id="A57044">
    <property type="entry name" value="A57044"/>
</dbReference>
<dbReference type="RefSeq" id="NP_446056.1">
    <property type="nucleotide sequence ID" value="NM_053604.2"/>
</dbReference>
<dbReference type="SMR" id="Q09326"/>
<dbReference type="FunCoup" id="Q09326">
    <property type="interactions" value="2009"/>
</dbReference>
<dbReference type="STRING" id="10116.ENSRNOP00000005608"/>
<dbReference type="BindingDB" id="Q09326"/>
<dbReference type="ChEMBL" id="CHEMBL4879456"/>
<dbReference type="CAZy" id="GT16">
    <property type="family name" value="Glycosyltransferase Family 16"/>
</dbReference>
<dbReference type="GlyCosmos" id="Q09326">
    <property type="glycosylation" value="2 sites, No reported glycans"/>
</dbReference>
<dbReference type="GlyGen" id="Q09326">
    <property type="glycosylation" value="2 sites"/>
</dbReference>
<dbReference type="PhosphoSitePlus" id="Q09326"/>
<dbReference type="PaxDb" id="10116-ENSRNOP00000005608"/>
<dbReference type="Ensembl" id="ENSRNOT00000005608.6">
    <property type="protein sequence ID" value="ENSRNOP00000005608.3"/>
    <property type="gene ID" value="ENSRNOG00000004234.6"/>
</dbReference>
<dbReference type="GeneID" id="94273"/>
<dbReference type="KEGG" id="rno:94273"/>
<dbReference type="UCSC" id="RGD:620098">
    <property type="organism name" value="rat"/>
</dbReference>
<dbReference type="AGR" id="RGD:620098"/>
<dbReference type="CTD" id="4247"/>
<dbReference type="RGD" id="620098">
    <property type="gene designation" value="Mgat2"/>
</dbReference>
<dbReference type="eggNOG" id="KOG2791">
    <property type="taxonomic scope" value="Eukaryota"/>
</dbReference>
<dbReference type="GeneTree" id="ENSGT00390000007341"/>
<dbReference type="HOGENOM" id="CLU_032753_2_1_1"/>
<dbReference type="InParanoid" id="Q09326"/>
<dbReference type="OMA" id="FWSAEIN"/>
<dbReference type="OrthoDB" id="6019616at2759"/>
<dbReference type="PhylomeDB" id="Q09326"/>
<dbReference type="TreeFam" id="TF314772"/>
<dbReference type="BRENDA" id="2.4.1.143">
    <property type="organism ID" value="5301"/>
</dbReference>
<dbReference type="Reactome" id="R-RNO-975578">
    <property type="pathway name" value="Reactions specific to the complex N-glycan synthesis pathway"/>
</dbReference>
<dbReference type="UniPathway" id="UPA00378"/>
<dbReference type="PRO" id="PR:Q09326"/>
<dbReference type="Proteomes" id="UP000002494">
    <property type="component" value="Chromosome 6"/>
</dbReference>
<dbReference type="Bgee" id="ENSRNOG00000004234">
    <property type="expression patterns" value="Expressed in pancreas and 19 other cell types or tissues"/>
</dbReference>
<dbReference type="GO" id="GO:0098556">
    <property type="term" value="C:cytoplasmic side of rough endoplasmic reticulum membrane"/>
    <property type="evidence" value="ECO:0000266"/>
    <property type="project" value="RGD"/>
</dbReference>
<dbReference type="GO" id="GO:0000139">
    <property type="term" value="C:Golgi membrane"/>
    <property type="evidence" value="ECO:0000250"/>
    <property type="project" value="UniProtKB"/>
</dbReference>
<dbReference type="GO" id="GO:0005795">
    <property type="term" value="C:Golgi stack"/>
    <property type="evidence" value="ECO:0007669"/>
    <property type="project" value="InterPro"/>
</dbReference>
<dbReference type="GO" id="GO:0015934">
    <property type="term" value="C:large ribosomal subunit"/>
    <property type="evidence" value="ECO:0000266"/>
    <property type="project" value="RGD"/>
</dbReference>
<dbReference type="GO" id="GO:0008455">
    <property type="term" value="F:alpha-1,6-mannosylglycoprotein 2-beta-N-acetylglucosaminyltransferase activity"/>
    <property type="evidence" value="ECO:0000314"/>
    <property type="project" value="RGD"/>
</dbReference>
<dbReference type="GO" id="GO:0030246">
    <property type="term" value="F:carbohydrate binding"/>
    <property type="evidence" value="ECO:0000353"/>
    <property type="project" value="RGD"/>
</dbReference>
<dbReference type="GO" id="GO:0030145">
    <property type="term" value="F:manganese ion binding"/>
    <property type="evidence" value="ECO:0000250"/>
    <property type="project" value="UniProtKB"/>
</dbReference>
<dbReference type="GO" id="GO:0042803">
    <property type="term" value="F:protein homodimerization activity"/>
    <property type="evidence" value="ECO:0000250"/>
    <property type="project" value="UniProtKB"/>
</dbReference>
<dbReference type="GO" id="GO:0009312">
    <property type="term" value="P:oligosaccharide biosynthetic process"/>
    <property type="evidence" value="ECO:0007669"/>
    <property type="project" value="InterPro"/>
</dbReference>
<dbReference type="GO" id="GO:0006487">
    <property type="term" value="P:protein N-linked glycosylation"/>
    <property type="evidence" value="ECO:0000318"/>
    <property type="project" value="GO_Central"/>
</dbReference>
<dbReference type="GO" id="GO:0018279">
    <property type="term" value="P:protein N-linked glycosylation via asparagine"/>
    <property type="evidence" value="ECO:0000250"/>
    <property type="project" value="UniProtKB"/>
</dbReference>
<dbReference type="Gene3D" id="3.90.550.10">
    <property type="entry name" value="Spore Coat Polysaccharide Biosynthesis Protein SpsA, Chain A"/>
    <property type="match status" value="1"/>
</dbReference>
<dbReference type="InterPro" id="IPR007754">
    <property type="entry name" value="GlcNAc_II"/>
</dbReference>
<dbReference type="InterPro" id="IPR029044">
    <property type="entry name" value="Nucleotide-diphossugar_trans"/>
</dbReference>
<dbReference type="PANTHER" id="PTHR12871:SF0">
    <property type="entry name" value="ALPHA-1,6-MANNOSYL-GLYCOPROTEIN 2-BETA-N-ACETYLGLUCOSAMINYLTRANSFERASE"/>
    <property type="match status" value="1"/>
</dbReference>
<dbReference type="PANTHER" id="PTHR12871">
    <property type="entry name" value="BETA-1,2-N-ACETYLGLUCOSAMINYLTRANSFERASE II"/>
    <property type="match status" value="1"/>
</dbReference>
<dbReference type="Pfam" id="PF05060">
    <property type="entry name" value="MGAT2"/>
    <property type="match status" value="1"/>
</dbReference>
<dbReference type="SUPFAM" id="SSF53448">
    <property type="entry name" value="Nucleotide-diphospho-sugar transferases"/>
    <property type="match status" value="1"/>
</dbReference>
<name>MGAT2_RAT</name>